<organism>
    <name type="scientific">Escherichia coli</name>
    <dbReference type="NCBI Taxonomy" id="562"/>
    <lineage>
        <taxon>Bacteria</taxon>
        <taxon>Pseudomonadati</taxon>
        <taxon>Pseudomonadota</taxon>
        <taxon>Gammaproteobacteria</taxon>
        <taxon>Enterobacterales</taxon>
        <taxon>Enterobacteriaceae</taxon>
        <taxon>Escherichia</taxon>
    </lineage>
</organism>
<comment type="similarity">
    <text evidence="2">Belongs to the transposase 8 family.</text>
</comment>
<feature type="chain" id="PRO_0000075492" description="Insertion element IS2A uncharacterized 48.2 kDa protein">
    <location>
        <begin position="1"/>
        <end position="424"/>
    </location>
</feature>
<feature type="domain" description="Integrase catalytic" evidence="1">
    <location>
        <begin position="229"/>
        <end position="412"/>
    </location>
</feature>
<evidence type="ECO:0000255" key="1">
    <source>
        <dbReference type="PROSITE-ProRule" id="PRU00457"/>
    </source>
</evidence>
<evidence type="ECO:0000305" key="2"/>
<dbReference type="EMBL" id="D85613">
    <property type="protein sequence ID" value="BAA12836.1"/>
    <property type="molecule type" value="Genomic_DNA"/>
</dbReference>
<dbReference type="PIR" id="S78610">
    <property type="entry name" value="S78610"/>
</dbReference>
<dbReference type="GO" id="GO:0003677">
    <property type="term" value="F:DNA binding"/>
    <property type="evidence" value="ECO:0007669"/>
    <property type="project" value="InterPro"/>
</dbReference>
<dbReference type="GO" id="GO:0004803">
    <property type="term" value="F:transposase activity"/>
    <property type="evidence" value="ECO:0007669"/>
    <property type="project" value="InterPro"/>
</dbReference>
<dbReference type="GO" id="GO:0015074">
    <property type="term" value="P:DNA integration"/>
    <property type="evidence" value="ECO:0007669"/>
    <property type="project" value="InterPro"/>
</dbReference>
<dbReference type="GO" id="GO:0006313">
    <property type="term" value="P:DNA transposition"/>
    <property type="evidence" value="ECO:0007669"/>
    <property type="project" value="InterPro"/>
</dbReference>
<dbReference type="Gene3D" id="3.30.420.10">
    <property type="entry name" value="Ribonuclease H-like superfamily/Ribonuclease H"/>
    <property type="match status" value="1"/>
</dbReference>
<dbReference type="InterPro" id="IPR009057">
    <property type="entry name" value="Homeodomain-like_sf"/>
</dbReference>
<dbReference type="InterPro" id="IPR025948">
    <property type="entry name" value="HTH-like_dom"/>
</dbReference>
<dbReference type="InterPro" id="IPR001584">
    <property type="entry name" value="Integrase_cat-core"/>
</dbReference>
<dbReference type="InterPro" id="IPR012337">
    <property type="entry name" value="RNaseH-like_sf"/>
</dbReference>
<dbReference type="InterPro" id="IPR036397">
    <property type="entry name" value="RNaseH_sf"/>
</dbReference>
<dbReference type="InterPro" id="IPR048020">
    <property type="entry name" value="Transpos_IS3"/>
</dbReference>
<dbReference type="InterPro" id="IPR002514">
    <property type="entry name" value="Transposase_8"/>
</dbReference>
<dbReference type="NCBIfam" id="NF006918">
    <property type="entry name" value="PRK09409.1"/>
    <property type="match status" value="1"/>
</dbReference>
<dbReference type="NCBIfam" id="NF006928">
    <property type="entry name" value="PRK09413.1"/>
    <property type="match status" value="1"/>
</dbReference>
<dbReference type="NCBIfam" id="NF033516">
    <property type="entry name" value="transpos_IS3"/>
    <property type="match status" value="1"/>
</dbReference>
<dbReference type="PANTHER" id="PTHR37936">
    <property type="entry name" value="TRANSPOSASE INSC FOR INSERTION ELEMENT IS2A-RELATED"/>
    <property type="match status" value="1"/>
</dbReference>
<dbReference type="PANTHER" id="PTHR37936:SF3">
    <property type="entry name" value="TRANSPOSASE INSC FOR INSERTION ELEMENT IS2A-RELATED"/>
    <property type="match status" value="1"/>
</dbReference>
<dbReference type="Pfam" id="PF13276">
    <property type="entry name" value="HTH_21"/>
    <property type="match status" value="1"/>
</dbReference>
<dbReference type="Pfam" id="PF01527">
    <property type="entry name" value="HTH_Tnp_1"/>
    <property type="match status" value="1"/>
</dbReference>
<dbReference type="Pfam" id="PF00665">
    <property type="entry name" value="rve"/>
    <property type="match status" value="1"/>
</dbReference>
<dbReference type="SUPFAM" id="SSF46689">
    <property type="entry name" value="Homeodomain-like"/>
    <property type="match status" value="1"/>
</dbReference>
<dbReference type="SUPFAM" id="SSF53098">
    <property type="entry name" value="Ribonuclease H-like"/>
    <property type="match status" value="1"/>
</dbReference>
<dbReference type="PROSITE" id="PS50994">
    <property type="entry name" value="INTEGRASE"/>
    <property type="match status" value="1"/>
</dbReference>
<keyword id="KW-0814">Transposable element</keyword>
<proteinExistence type="inferred from homology"/>
<name>YI2A_ECOLX</name>
<accession>P51026</accession>
<accession>Q47535</accession>
<sequence>MIVLILVFRLVIGEQMIDVLGPEKRRRRTTQEKIAIVQQSFEPGMTVSLVARQHGVAASQLFLWRKQYQEGSLTAVAAGEQVVPASELAAAMKQIKELQRLLGKKTMENELLKEAVEYGRAKKWIAHAPLIARGWGVSLVSRCLRVSRAQLHVILRRTDDWMDGRRSRHTDDTDVLLRIHHVIGELPTYGYRRVWALLRRQAELDGMPAINAKRVYRIMRQNALLLERKPAVPPSKRAHTGRVAVKESNQRWCSDGFEFCCDNGERLRVTFALDCCDREALHWAVTTGGFNSETVQDVMLGAVERRFGNDLPSSPVEWLTDNGSCYRANETRQFARMLGLEPKNTAVRSPESNGIAESFVKTIKRDYISIMPKPDGLTAAKNLAEAFEHYNEWHPHSALGYRSPREYLRHGACNGLSDNRCLEI</sequence>
<protein>
    <recommendedName>
        <fullName>Insertion element IS2A uncharacterized 48.2 kDa protein</fullName>
    </recommendedName>
</protein>
<reference key="1">
    <citation type="submission" date="1996-06" db="EMBL/GenBank/DDBJ databases">
        <authorList>
            <person name="Nashimoto H."/>
            <person name="Saito N."/>
        </authorList>
    </citation>
    <scope>NUCLEOTIDE SEQUENCE [GENOMIC DNA]</scope>
</reference>